<keyword id="KW-0687">Ribonucleoprotein</keyword>
<keyword id="KW-0689">Ribosomal protein</keyword>
<keyword id="KW-0694">RNA-binding</keyword>
<keyword id="KW-0699">rRNA-binding</keyword>
<reference key="1">
    <citation type="journal article" date="2007" name="J. Bacteriol.">
        <title>The complete genome sequence of Campylobacter jejuni strain 81116 (NCTC11828).</title>
        <authorList>
            <person name="Pearson B.M."/>
            <person name="Gaskin D.J.H."/>
            <person name="Segers R.P.A.M."/>
            <person name="Wells J.M."/>
            <person name="Nuijten P.J.M."/>
            <person name="van Vliet A.H.M."/>
        </authorList>
    </citation>
    <scope>NUCLEOTIDE SEQUENCE [LARGE SCALE GENOMIC DNA]</scope>
    <source>
        <strain>81116 / NCTC 11828</strain>
    </source>
</reference>
<proteinExistence type="inferred from homology"/>
<dbReference type="EMBL" id="CP000814">
    <property type="protein sequence ID" value="ABV53204.1"/>
    <property type="molecule type" value="Genomic_DNA"/>
</dbReference>
<dbReference type="RefSeq" id="WP_002851509.1">
    <property type="nucleotide sequence ID" value="NC_009839.1"/>
</dbReference>
<dbReference type="SMR" id="A8FP17"/>
<dbReference type="KEGG" id="cju:C8J_1607"/>
<dbReference type="HOGENOM" id="CLU_144911_0_1_7"/>
<dbReference type="GO" id="GO:0005737">
    <property type="term" value="C:cytoplasm"/>
    <property type="evidence" value="ECO:0007669"/>
    <property type="project" value="UniProtKB-ARBA"/>
</dbReference>
<dbReference type="GO" id="GO:0015935">
    <property type="term" value="C:small ribosomal subunit"/>
    <property type="evidence" value="ECO:0007669"/>
    <property type="project" value="InterPro"/>
</dbReference>
<dbReference type="GO" id="GO:0019843">
    <property type="term" value="F:rRNA binding"/>
    <property type="evidence" value="ECO:0007669"/>
    <property type="project" value="UniProtKB-UniRule"/>
</dbReference>
<dbReference type="GO" id="GO:0003735">
    <property type="term" value="F:structural constituent of ribosome"/>
    <property type="evidence" value="ECO:0007669"/>
    <property type="project" value="InterPro"/>
</dbReference>
<dbReference type="GO" id="GO:0000028">
    <property type="term" value="P:ribosomal small subunit assembly"/>
    <property type="evidence" value="ECO:0007669"/>
    <property type="project" value="TreeGrafter"/>
</dbReference>
<dbReference type="GO" id="GO:0006412">
    <property type="term" value="P:translation"/>
    <property type="evidence" value="ECO:0007669"/>
    <property type="project" value="UniProtKB-UniRule"/>
</dbReference>
<dbReference type="FunFam" id="3.30.860.10:FF:000001">
    <property type="entry name" value="30S ribosomal protein S19"/>
    <property type="match status" value="1"/>
</dbReference>
<dbReference type="Gene3D" id="3.30.860.10">
    <property type="entry name" value="30s Ribosomal Protein S19, Chain A"/>
    <property type="match status" value="1"/>
</dbReference>
<dbReference type="HAMAP" id="MF_00531">
    <property type="entry name" value="Ribosomal_uS19"/>
    <property type="match status" value="1"/>
</dbReference>
<dbReference type="InterPro" id="IPR002222">
    <property type="entry name" value="Ribosomal_uS19"/>
</dbReference>
<dbReference type="InterPro" id="IPR005732">
    <property type="entry name" value="Ribosomal_uS19_bac-type"/>
</dbReference>
<dbReference type="InterPro" id="IPR020934">
    <property type="entry name" value="Ribosomal_uS19_CS"/>
</dbReference>
<dbReference type="InterPro" id="IPR023575">
    <property type="entry name" value="Ribosomal_uS19_SF"/>
</dbReference>
<dbReference type="NCBIfam" id="TIGR01050">
    <property type="entry name" value="rpsS_bact"/>
    <property type="match status" value="1"/>
</dbReference>
<dbReference type="PANTHER" id="PTHR11880">
    <property type="entry name" value="RIBOSOMAL PROTEIN S19P FAMILY MEMBER"/>
    <property type="match status" value="1"/>
</dbReference>
<dbReference type="PANTHER" id="PTHR11880:SF8">
    <property type="entry name" value="SMALL RIBOSOMAL SUBUNIT PROTEIN US19M"/>
    <property type="match status" value="1"/>
</dbReference>
<dbReference type="Pfam" id="PF00203">
    <property type="entry name" value="Ribosomal_S19"/>
    <property type="match status" value="1"/>
</dbReference>
<dbReference type="PIRSF" id="PIRSF002144">
    <property type="entry name" value="Ribosomal_S19"/>
    <property type="match status" value="1"/>
</dbReference>
<dbReference type="PRINTS" id="PR00975">
    <property type="entry name" value="RIBOSOMALS19"/>
</dbReference>
<dbReference type="SUPFAM" id="SSF54570">
    <property type="entry name" value="Ribosomal protein S19"/>
    <property type="match status" value="1"/>
</dbReference>
<dbReference type="PROSITE" id="PS00323">
    <property type="entry name" value="RIBOSOMAL_S19"/>
    <property type="match status" value="1"/>
</dbReference>
<name>RS19_CAMJ8</name>
<sequence>MARSLKKGPFVDDHVMKKVIAAKKANDNKPIKTWSRRSTITPDMIGLTFNVHNGKSFIPVYITENHIGYKLGEFAPTRTFKGHKGSVQKKIGK</sequence>
<feature type="chain" id="PRO_1000072506" description="Small ribosomal subunit protein uS19">
    <location>
        <begin position="1"/>
        <end position="93"/>
    </location>
</feature>
<protein>
    <recommendedName>
        <fullName evidence="1">Small ribosomal subunit protein uS19</fullName>
    </recommendedName>
    <alternativeName>
        <fullName evidence="2">30S ribosomal protein S19</fullName>
    </alternativeName>
</protein>
<comment type="function">
    <text evidence="1">Protein S19 forms a complex with S13 that binds strongly to the 16S ribosomal RNA.</text>
</comment>
<comment type="similarity">
    <text evidence="1">Belongs to the universal ribosomal protein uS19 family.</text>
</comment>
<accession>A8FP17</accession>
<gene>
    <name evidence="1" type="primary">rpsS</name>
    <name type="ordered locus">C8J_1607</name>
</gene>
<evidence type="ECO:0000255" key="1">
    <source>
        <dbReference type="HAMAP-Rule" id="MF_00531"/>
    </source>
</evidence>
<evidence type="ECO:0000305" key="2"/>
<organism>
    <name type="scientific">Campylobacter jejuni subsp. jejuni serotype O:6 (strain 81116 / NCTC 11828)</name>
    <dbReference type="NCBI Taxonomy" id="407148"/>
    <lineage>
        <taxon>Bacteria</taxon>
        <taxon>Pseudomonadati</taxon>
        <taxon>Campylobacterota</taxon>
        <taxon>Epsilonproteobacteria</taxon>
        <taxon>Campylobacterales</taxon>
        <taxon>Campylobacteraceae</taxon>
        <taxon>Campylobacter</taxon>
    </lineage>
</organism>